<feature type="chain" id="PRO_0000444601" description="Extracellular signal-regulated kinase 7">
    <location>
        <begin position="1"/>
        <end position="916"/>
    </location>
</feature>
<feature type="domain" description="Protein kinase" evidence="1">
    <location>
        <begin position="25"/>
        <end position="319"/>
    </location>
</feature>
<feature type="region of interest" description="Disordered" evidence="2">
    <location>
        <begin position="364"/>
        <end position="419"/>
    </location>
</feature>
<feature type="region of interest" description="Disordered" evidence="2">
    <location>
        <begin position="452"/>
        <end position="477"/>
    </location>
</feature>
<feature type="region of interest" description="Disordered" evidence="2">
    <location>
        <begin position="588"/>
        <end position="608"/>
    </location>
</feature>
<feature type="region of interest" description="Disordered" evidence="2">
    <location>
        <begin position="711"/>
        <end position="742"/>
    </location>
</feature>
<feature type="region of interest" description="Disordered" evidence="2">
    <location>
        <begin position="792"/>
        <end position="813"/>
    </location>
</feature>
<feature type="region of interest" description="Disordered" evidence="2">
    <location>
        <begin position="883"/>
        <end position="916"/>
    </location>
</feature>
<feature type="compositionally biased region" description="Polar residues" evidence="2">
    <location>
        <begin position="364"/>
        <end position="376"/>
    </location>
</feature>
<feature type="compositionally biased region" description="Polar residues" evidence="2">
    <location>
        <begin position="390"/>
        <end position="403"/>
    </location>
</feature>
<feature type="compositionally biased region" description="Basic and acidic residues" evidence="2">
    <location>
        <begin position="590"/>
        <end position="608"/>
    </location>
</feature>
<feature type="compositionally biased region" description="Basic and acidic residues" evidence="2">
    <location>
        <begin position="715"/>
        <end position="730"/>
    </location>
</feature>
<feature type="compositionally biased region" description="Basic and acidic residues" evidence="2">
    <location>
        <begin position="800"/>
        <end position="811"/>
    </location>
</feature>
<feature type="compositionally biased region" description="Basic residues" evidence="2">
    <location>
        <begin position="883"/>
        <end position="892"/>
    </location>
</feature>
<feature type="compositionally biased region" description="Basic and acidic residues" evidence="2">
    <location>
        <begin position="894"/>
        <end position="903"/>
    </location>
</feature>
<feature type="active site" description="Proton acceptor" evidence="1">
    <location>
        <position position="149"/>
    </location>
</feature>
<feature type="binding site" evidence="1">
    <location>
        <begin position="31"/>
        <end position="39"/>
    </location>
    <ligand>
        <name>ATP</name>
        <dbReference type="ChEBI" id="CHEBI:30616"/>
    </ligand>
</feature>
<feature type="binding site" evidence="1">
    <location>
        <position position="54"/>
    </location>
    <ligand>
        <name>ATP</name>
        <dbReference type="ChEBI" id="CHEBI:30616"/>
    </ligand>
</feature>
<feature type="splice variant" id="VSP_059618" description="In isoform 2.">
    <original>TTSAKQPTTSPAERKKEPSSVEVTQSRKNIKLLGSAHKAQSKEINHMESAITQVSIASA</original>
    <variation>LHRAITKVTSTSNHLQQETFKERKESVESITVQRPVKERLHRSMHRKAHRMRLKKGHSQ</variation>
    <location>
        <begin position="393"/>
        <end position="451"/>
    </location>
</feature>
<feature type="splice variant" id="VSP_059619" description="In isoform 2.">
    <location>
        <begin position="452"/>
        <end position="916"/>
    </location>
</feature>
<feature type="mutagenesis site" description="Does not lead to transitional endoplasmic reticulum sites disassembly. Partially rescue transitional endoplasmic reticulum site disassembly induced by amino-acid starvation." evidence="3">
    <original>K</original>
    <variation>R</variation>
    <location>
        <position position="54"/>
    </location>
</feature>
<feature type="mutagenesis site" description="Does not lead to transitional endoplasmic reticulum sites disassembly; when associated with F-192." evidence="3">
    <original>T</original>
    <variation>A</variation>
    <location>
        <position position="190"/>
    </location>
</feature>
<feature type="mutagenesis site" description="Does not lead to transitional endoplasmic reticulum sites disassembly; when associated with A-190." evidence="3">
    <original>Y</original>
    <variation>F</variation>
    <location>
        <position position="192"/>
    </location>
</feature>
<reference key="1">
    <citation type="journal article" date="2000" name="Science">
        <title>The genome sequence of Drosophila melanogaster.</title>
        <authorList>
            <person name="Adams M.D."/>
            <person name="Celniker S.E."/>
            <person name="Holt R.A."/>
            <person name="Evans C.A."/>
            <person name="Gocayne J.D."/>
            <person name="Amanatides P.G."/>
            <person name="Scherer S.E."/>
            <person name="Li P.W."/>
            <person name="Hoskins R.A."/>
            <person name="Galle R.F."/>
            <person name="George R.A."/>
            <person name="Lewis S.E."/>
            <person name="Richards S."/>
            <person name="Ashburner M."/>
            <person name="Henderson S.N."/>
            <person name="Sutton G.G."/>
            <person name="Wortman J.R."/>
            <person name="Yandell M.D."/>
            <person name="Zhang Q."/>
            <person name="Chen L.X."/>
            <person name="Brandon R.C."/>
            <person name="Rogers Y.-H.C."/>
            <person name="Blazej R.G."/>
            <person name="Champe M."/>
            <person name="Pfeiffer B.D."/>
            <person name="Wan K.H."/>
            <person name="Doyle C."/>
            <person name="Baxter E.G."/>
            <person name="Helt G."/>
            <person name="Nelson C.R."/>
            <person name="Miklos G.L.G."/>
            <person name="Abril J.F."/>
            <person name="Agbayani A."/>
            <person name="An H.-J."/>
            <person name="Andrews-Pfannkoch C."/>
            <person name="Baldwin D."/>
            <person name="Ballew R.M."/>
            <person name="Basu A."/>
            <person name="Baxendale J."/>
            <person name="Bayraktaroglu L."/>
            <person name="Beasley E.M."/>
            <person name="Beeson K.Y."/>
            <person name="Benos P.V."/>
            <person name="Berman B.P."/>
            <person name="Bhandari D."/>
            <person name="Bolshakov S."/>
            <person name="Borkova D."/>
            <person name="Botchan M.R."/>
            <person name="Bouck J."/>
            <person name="Brokstein P."/>
            <person name="Brottier P."/>
            <person name="Burtis K.C."/>
            <person name="Busam D.A."/>
            <person name="Butler H."/>
            <person name="Cadieu E."/>
            <person name="Center A."/>
            <person name="Chandra I."/>
            <person name="Cherry J.M."/>
            <person name="Cawley S."/>
            <person name="Dahlke C."/>
            <person name="Davenport L.B."/>
            <person name="Davies P."/>
            <person name="de Pablos B."/>
            <person name="Delcher A."/>
            <person name="Deng Z."/>
            <person name="Mays A.D."/>
            <person name="Dew I."/>
            <person name="Dietz S.M."/>
            <person name="Dodson K."/>
            <person name="Doup L.E."/>
            <person name="Downes M."/>
            <person name="Dugan-Rocha S."/>
            <person name="Dunkov B.C."/>
            <person name="Dunn P."/>
            <person name="Durbin K.J."/>
            <person name="Evangelista C.C."/>
            <person name="Ferraz C."/>
            <person name="Ferriera S."/>
            <person name="Fleischmann W."/>
            <person name="Fosler C."/>
            <person name="Gabrielian A.E."/>
            <person name="Garg N.S."/>
            <person name="Gelbart W.M."/>
            <person name="Glasser K."/>
            <person name="Glodek A."/>
            <person name="Gong F."/>
            <person name="Gorrell J.H."/>
            <person name="Gu Z."/>
            <person name="Guan P."/>
            <person name="Harris M."/>
            <person name="Harris N.L."/>
            <person name="Harvey D.A."/>
            <person name="Heiman T.J."/>
            <person name="Hernandez J.R."/>
            <person name="Houck J."/>
            <person name="Hostin D."/>
            <person name="Houston K.A."/>
            <person name="Howland T.J."/>
            <person name="Wei M.-H."/>
            <person name="Ibegwam C."/>
            <person name="Jalali M."/>
            <person name="Kalush F."/>
            <person name="Karpen G.H."/>
            <person name="Ke Z."/>
            <person name="Kennison J.A."/>
            <person name="Ketchum K.A."/>
            <person name="Kimmel B.E."/>
            <person name="Kodira C.D."/>
            <person name="Kraft C.L."/>
            <person name="Kravitz S."/>
            <person name="Kulp D."/>
            <person name="Lai Z."/>
            <person name="Lasko P."/>
            <person name="Lei Y."/>
            <person name="Levitsky A.A."/>
            <person name="Li J.H."/>
            <person name="Li Z."/>
            <person name="Liang Y."/>
            <person name="Lin X."/>
            <person name="Liu X."/>
            <person name="Mattei B."/>
            <person name="McIntosh T.C."/>
            <person name="McLeod M.P."/>
            <person name="McPherson D."/>
            <person name="Merkulov G."/>
            <person name="Milshina N.V."/>
            <person name="Mobarry C."/>
            <person name="Morris J."/>
            <person name="Moshrefi A."/>
            <person name="Mount S.M."/>
            <person name="Moy M."/>
            <person name="Murphy B."/>
            <person name="Murphy L."/>
            <person name="Muzny D.M."/>
            <person name="Nelson D.L."/>
            <person name="Nelson D.R."/>
            <person name="Nelson K.A."/>
            <person name="Nixon K."/>
            <person name="Nusskern D.R."/>
            <person name="Pacleb J.M."/>
            <person name="Palazzolo M."/>
            <person name="Pittman G.S."/>
            <person name="Pan S."/>
            <person name="Pollard J."/>
            <person name="Puri V."/>
            <person name="Reese M.G."/>
            <person name="Reinert K."/>
            <person name="Remington K."/>
            <person name="Saunders R.D.C."/>
            <person name="Scheeler F."/>
            <person name="Shen H."/>
            <person name="Shue B.C."/>
            <person name="Siden-Kiamos I."/>
            <person name="Simpson M."/>
            <person name="Skupski M.P."/>
            <person name="Smith T.J."/>
            <person name="Spier E."/>
            <person name="Spradling A.C."/>
            <person name="Stapleton M."/>
            <person name="Strong R."/>
            <person name="Sun E."/>
            <person name="Svirskas R."/>
            <person name="Tector C."/>
            <person name="Turner R."/>
            <person name="Venter E."/>
            <person name="Wang A.H."/>
            <person name="Wang X."/>
            <person name="Wang Z.-Y."/>
            <person name="Wassarman D.A."/>
            <person name="Weinstock G.M."/>
            <person name="Weissenbach J."/>
            <person name="Williams S.M."/>
            <person name="Woodage T."/>
            <person name="Worley K.C."/>
            <person name="Wu D."/>
            <person name="Yang S."/>
            <person name="Yao Q.A."/>
            <person name="Ye J."/>
            <person name="Yeh R.-F."/>
            <person name="Zaveri J.S."/>
            <person name="Zhan M."/>
            <person name="Zhang G."/>
            <person name="Zhao Q."/>
            <person name="Zheng L."/>
            <person name="Zheng X.H."/>
            <person name="Zhong F.N."/>
            <person name="Zhong W."/>
            <person name="Zhou X."/>
            <person name="Zhu S.C."/>
            <person name="Zhu X."/>
            <person name="Smith H.O."/>
            <person name="Gibbs R.A."/>
            <person name="Myers E.W."/>
            <person name="Rubin G.M."/>
            <person name="Venter J.C."/>
        </authorList>
    </citation>
    <scope>NUCLEOTIDE SEQUENCE [LARGE SCALE GENOMIC DNA]</scope>
    <source>
        <strain>Berkeley</strain>
    </source>
</reference>
<reference key="2">
    <citation type="journal article" date="2002" name="Genome Biol.">
        <title>Annotation of the Drosophila melanogaster euchromatic genome: a systematic review.</title>
        <authorList>
            <person name="Misra S."/>
            <person name="Crosby M.A."/>
            <person name="Mungall C.J."/>
            <person name="Matthews B.B."/>
            <person name="Campbell K.S."/>
            <person name="Hradecky P."/>
            <person name="Huang Y."/>
            <person name="Kaminker J.S."/>
            <person name="Millburn G.H."/>
            <person name="Prochnik S.E."/>
            <person name="Smith C.D."/>
            <person name="Tupy J.L."/>
            <person name="Whitfield E.J."/>
            <person name="Bayraktaroglu L."/>
            <person name="Berman B.P."/>
            <person name="Bettencourt B.R."/>
            <person name="Celniker S.E."/>
            <person name="de Grey A.D.N.J."/>
            <person name="Drysdale R.A."/>
            <person name="Harris N.L."/>
            <person name="Richter J."/>
            <person name="Russo S."/>
            <person name="Schroeder A.J."/>
            <person name="Shu S.Q."/>
            <person name="Stapleton M."/>
            <person name="Yamada C."/>
            <person name="Ashburner M."/>
            <person name="Gelbart W.M."/>
            <person name="Rubin G.M."/>
            <person name="Lewis S.E."/>
        </authorList>
    </citation>
    <scope>GENOME REANNOTATION</scope>
    <source>
        <strain>Berkeley</strain>
    </source>
</reference>
<reference key="3">
    <citation type="submission" date="2003-02" db="EMBL/GenBank/DDBJ databases">
        <authorList>
            <person name="Stapleton M."/>
            <person name="Brokstein P."/>
            <person name="Hong L."/>
            <person name="Agbayani A."/>
            <person name="Carlson J."/>
            <person name="Champe M."/>
            <person name="Chavez C."/>
            <person name="Dorsett V."/>
            <person name="Dresnek D."/>
            <person name="Farfan D."/>
            <person name="Frise E."/>
            <person name="George R."/>
            <person name="Gonzalez M."/>
            <person name="Guarin H."/>
            <person name="Kronmiller B."/>
            <person name="Li P."/>
            <person name="Liao G."/>
            <person name="Miranda A."/>
            <person name="Mungall C.J."/>
            <person name="Nunoo J."/>
            <person name="Pacleb J."/>
            <person name="Paragas V."/>
            <person name="Park S."/>
            <person name="Patel S."/>
            <person name="Phouanenavong S."/>
            <person name="Wan K."/>
            <person name="Yu C."/>
            <person name="Lewis S.E."/>
            <person name="Rubin G.M."/>
            <person name="Celniker S."/>
        </authorList>
    </citation>
    <scope>NUCLEOTIDE SEQUENCE [LARGE SCALE MRNA] (ISOFORM 1)</scope>
    <source>
        <strain>Berkeley</strain>
        <tissue>Testis</tissue>
    </source>
</reference>
<reference key="4">
    <citation type="journal article" date="2011" name="EMBO J.">
        <title>ERK7 is a negative regulator of protein secretion in response to amino-acid starvation by modulating Sec16 membrane association.</title>
        <authorList>
            <person name="Zacharogianni M."/>
            <person name="Kondylis V."/>
            <person name="Tang Y."/>
            <person name="Farhan H."/>
            <person name="Xanthakis D."/>
            <person name="Fuchs F."/>
            <person name="Boutros M."/>
            <person name="Rabouille C."/>
        </authorList>
    </citation>
    <scope>MUTAGENESIS OF LYS-54; THR-190 AND TYR-192</scope>
    <scope>FUNCTION</scope>
    <scope>INDUCTION</scope>
</reference>
<reference key="5">
    <citation type="journal article" date="2014" name="PLoS Genet.">
        <title>p53- and ERK7-dependent ribosome surveillance response regulates Drosophila insulin-like peptide secretion.</title>
        <authorList>
            <person name="Hasygar K."/>
            <person name="Hietakangas V."/>
        </authorList>
    </citation>
    <scope>INDUCTION</scope>
    <scope>FUNCTION</scope>
</reference>
<accession>Q9W354</accession>
<accession>M9MSN4</accession>
<comment type="function">
    <text evidence="3 4">Atypical MAPK protein that regulates protein secretion in a kinase activity-dependent manner (PubMed:21847093, PubMed:25393288). In response to starvation regulates protein secretion by mediating transitional endoplasmic reticulum site disassembly (PubMed:21847093). Mediates inhibition of insulin-like peptide secretion upon disturbed ribosome biogenesis and acts as a downstream effector of TP53 (PubMed:25393288).</text>
</comment>
<comment type="catalytic activity">
    <reaction>
        <text>L-seryl-[protein] + ATP = O-phospho-L-seryl-[protein] + ADP + H(+)</text>
        <dbReference type="Rhea" id="RHEA:17989"/>
        <dbReference type="Rhea" id="RHEA-COMP:9863"/>
        <dbReference type="Rhea" id="RHEA-COMP:11604"/>
        <dbReference type="ChEBI" id="CHEBI:15378"/>
        <dbReference type="ChEBI" id="CHEBI:29999"/>
        <dbReference type="ChEBI" id="CHEBI:30616"/>
        <dbReference type="ChEBI" id="CHEBI:83421"/>
        <dbReference type="ChEBI" id="CHEBI:456216"/>
        <dbReference type="EC" id="2.7.11.24"/>
    </reaction>
</comment>
<comment type="catalytic activity">
    <reaction>
        <text>L-threonyl-[protein] + ATP = O-phospho-L-threonyl-[protein] + ADP + H(+)</text>
        <dbReference type="Rhea" id="RHEA:46608"/>
        <dbReference type="Rhea" id="RHEA-COMP:11060"/>
        <dbReference type="Rhea" id="RHEA-COMP:11605"/>
        <dbReference type="ChEBI" id="CHEBI:15378"/>
        <dbReference type="ChEBI" id="CHEBI:30013"/>
        <dbReference type="ChEBI" id="CHEBI:30616"/>
        <dbReference type="ChEBI" id="CHEBI:61977"/>
        <dbReference type="ChEBI" id="CHEBI:456216"/>
        <dbReference type="EC" id="2.7.11.24"/>
    </reaction>
</comment>
<comment type="alternative products">
    <event type="alternative splicing"/>
    <isoform>
        <id>Q9W354-1</id>
        <name>1</name>
        <sequence type="displayed"/>
    </isoform>
    <isoform>
        <id>Q9W354-2</id>
        <name>2</name>
        <sequence type="described" ref="VSP_059618 VSP_059619"/>
    </isoform>
</comment>
<comment type="induction">
    <text evidence="3 4">Amino-acid starvation stabilizes protein level (PubMed:21847093). Up-regulated upon impaired ribosome biogenesis and starvation (PubMed:25393288).</text>
</comment>
<comment type="similarity">
    <text evidence="1">Belongs to the protein kinase superfamily. Ser/Thr protein kinase family.</text>
</comment>
<sequence length="916" mass="105715">MANYQTAHAQERRIQELDQTVESIFDVRKRMGKGAYGIVWKATDRRTKNTVALKKVFDAFRDETDAQRTYREVIFLRAFRCHPNIVRLVDIFKASNNLDFYLVFEFMESDLHNVIKRGNVLKDVHKRFVMYQLINAIKFIHSGNVIHRDLKPSNILIDSKCRLKVADFGLARTLSSRRIYDDLEQDGMLTDYVATRWYRAPEILVASRNYTKGIDMWGLGCILGEMIRQKPLFQGTSTVNQIEKIVTSLPNVTKLDIASIGPSFGSVLLSRNIQRDRRYSLDEMMKNCCDDGISLVKALLVLNPHNRLTAKEAIRHPYVSRFQYASAEMDLHMDVVPPLKDHVRYDVDQYRNSLYELIDRETSCSNRTVSNSTPSSNRDELPKPVRVTKQARTTSAKQPTTSPAERKKEPSSVEVTQSRKNIKLLGSAHKAQSKEINHMESAITQVSIASAPPAAAPPAPAATAPAVPRKSGDKSVPKCQHNNAAVQRELAAVAAAAAVARRKKSSWQSQAQSQGKFHTEAKAHVQTAIQTQKDNIKDSPPRMIQESQSLTEAKAPIPKNRYSNKMCQEKKYKKKHHSMSCITRDTFPSETEHRQQREERAYQRQMKRELQLKESYRRRIEAESEPLKETTEQESKTIKVIEQKVCEHTEKKADESLSKDQQKDSITFGTCVRERIHHLELEMEKCTEELVDFVELNADVLNYANVSTHLKKLQRSKESDEKDEDDRRALPEGIGGPGSQNYEIFRQEQEKERQRQVQEFLARDETNEYDNLDLDHAYRAKYYTAYKEIGKELNPAPDSGGRDSGSEHSPGRDNYTTYADYFLKYTTPQQNWNDLERANGLQREHDRIYGLFWLNDRRQEEKYRRKLAQNDQEELPVHHHKACRHRHHKPNHHAPYDHMRPTEDDIQEADSLPESN</sequence>
<name>ERK7_DROME</name>
<organism>
    <name type="scientific">Drosophila melanogaster</name>
    <name type="common">Fruit fly</name>
    <dbReference type="NCBI Taxonomy" id="7227"/>
    <lineage>
        <taxon>Eukaryota</taxon>
        <taxon>Metazoa</taxon>
        <taxon>Ecdysozoa</taxon>
        <taxon>Arthropoda</taxon>
        <taxon>Hexapoda</taxon>
        <taxon>Insecta</taxon>
        <taxon>Pterygota</taxon>
        <taxon>Neoptera</taxon>
        <taxon>Endopterygota</taxon>
        <taxon>Diptera</taxon>
        <taxon>Brachycera</taxon>
        <taxon>Muscomorpha</taxon>
        <taxon>Ephydroidea</taxon>
        <taxon>Drosophilidae</taxon>
        <taxon>Drosophila</taxon>
        <taxon>Sophophora</taxon>
    </lineage>
</organism>
<evidence type="ECO:0000255" key="1">
    <source>
        <dbReference type="PROSITE-ProRule" id="PRU00159"/>
    </source>
</evidence>
<evidence type="ECO:0000256" key="2">
    <source>
        <dbReference type="SAM" id="MobiDB-lite"/>
    </source>
</evidence>
<evidence type="ECO:0000269" key="3">
    <source>
    </source>
</evidence>
<evidence type="ECO:0000269" key="4">
    <source>
    </source>
</evidence>
<evidence type="ECO:0000305" key="5"/>
<evidence type="ECO:0000312" key="6">
    <source>
        <dbReference type="FlyBase" id="FBgn0052703"/>
    </source>
</evidence>
<protein>
    <recommendedName>
        <fullName evidence="5">Extracellular signal-regulated kinase 7</fullName>
        <ecNumber evidence="1">2.7.11.24</ecNumber>
    </recommendedName>
</protein>
<gene>
    <name evidence="6" type="primary">Erk7</name>
    <name evidence="6" type="ORF">CG32703</name>
</gene>
<dbReference type="EC" id="2.7.11.24" evidence="1"/>
<dbReference type="EMBL" id="AE014298">
    <property type="protein sequence ID" value="AAF46481.2"/>
    <property type="molecule type" value="Genomic_DNA"/>
</dbReference>
<dbReference type="EMBL" id="AE014298">
    <property type="protein sequence ID" value="ADV37650.1"/>
    <property type="molecule type" value="Genomic_DNA"/>
</dbReference>
<dbReference type="EMBL" id="AE014298">
    <property type="protein sequence ID" value="ADV37651.1"/>
    <property type="molecule type" value="Genomic_DNA"/>
</dbReference>
<dbReference type="EMBL" id="BT003639">
    <property type="protein sequence ID" value="AAO39643.1"/>
    <property type="molecule type" value="mRNA"/>
</dbReference>
<dbReference type="RefSeq" id="NP_001188568.1">
    <molecule id="Q9W354-1"/>
    <property type="nucleotide sequence ID" value="NM_001201639.1"/>
</dbReference>
<dbReference type="RefSeq" id="NP_001188569.1">
    <molecule id="Q9W354-2"/>
    <property type="nucleotide sequence ID" value="NM_001201640.2"/>
</dbReference>
<dbReference type="RefSeq" id="NP_727335.1">
    <molecule id="Q9W354-1"/>
    <property type="nucleotide sequence ID" value="NM_167188.2"/>
</dbReference>
<dbReference type="SMR" id="Q9W354"/>
<dbReference type="IntAct" id="Q9W354">
    <property type="interactions" value="4"/>
</dbReference>
<dbReference type="STRING" id="7227.FBpp0071264"/>
<dbReference type="GlyGen" id="Q9W354">
    <property type="glycosylation" value="1 site"/>
</dbReference>
<dbReference type="PaxDb" id="7227-FBpp0071264"/>
<dbReference type="DNASU" id="31877"/>
<dbReference type="EnsemblMetazoa" id="FBtr0071329">
    <molecule id="Q9W354-1"/>
    <property type="protein sequence ID" value="FBpp0071264"/>
    <property type="gene ID" value="FBgn0052703"/>
</dbReference>
<dbReference type="EnsemblMetazoa" id="FBtr0302965">
    <molecule id="Q9W354-1"/>
    <property type="protein sequence ID" value="FBpp0292090"/>
    <property type="gene ID" value="FBgn0052703"/>
</dbReference>
<dbReference type="EnsemblMetazoa" id="FBtr0302966">
    <molecule id="Q9W354-2"/>
    <property type="protein sequence ID" value="FBpp0292091"/>
    <property type="gene ID" value="FBgn0052703"/>
</dbReference>
<dbReference type="GeneID" id="31877"/>
<dbReference type="KEGG" id="dme:Dmel_CG32703"/>
<dbReference type="UCSC" id="CG32703-RA">
    <molecule id="Q9W354-1"/>
    <property type="organism name" value="d. melanogaster"/>
</dbReference>
<dbReference type="AGR" id="FB:FBgn0052703"/>
<dbReference type="CTD" id="31877"/>
<dbReference type="FlyBase" id="FBgn0052703">
    <property type="gene designation" value="Erk7"/>
</dbReference>
<dbReference type="VEuPathDB" id="VectorBase:FBgn0052703"/>
<dbReference type="eggNOG" id="KOG0660">
    <property type="taxonomic scope" value="Eukaryota"/>
</dbReference>
<dbReference type="GeneTree" id="ENSGT00940000159758"/>
<dbReference type="HOGENOM" id="CLU_000288_181_14_1"/>
<dbReference type="InParanoid" id="Q9W354"/>
<dbReference type="OMA" id="PDQEWTR"/>
<dbReference type="OrthoDB" id="192887at2759"/>
<dbReference type="PhylomeDB" id="Q9W354"/>
<dbReference type="SignaLink" id="Q9W354"/>
<dbReference type="BioGRID-ORCS" id="31877">
    <property type="hits" value="0 hits in 3 CRISPR screens"/>
</dbReference>
<dbReference type="GenomeRNAi" id="31877"/>
<dbReference type="PRO" id="PR:Q9W354"/>
<dbReference type="Proteomes" id="UP000000803">
    <property type="component" value="Chromosome X"/>
</dbReference>
<dbReference type="Bgee" id="FBgn0052703">
    <property type="expression patterns" value="Expressed in mid-late elongation-stage spermatid (Drosophila) in testis and 20 other cell types or tissues"/>
</dbReference>
<dbReference type="ExpressionAtlas" id="Q9W354">
    <property type="expression patterns" value="baseline and differential"/>
</dbReference>
<dbReference type="GO" id="GO:0036064">
    <property type="term" value="C:ciliary basal body"/>
    <property type="evidence" value="ECO:0000314"/>
    <property type="project" value="FlyBase"/>
</dbReference>
<dbReference type="GO" id="GO:0005737">
    <property type="term" value="C:cytoplasm"/>
    <property type="evidence" value="ECO:0000314"/>
    <property type="project" value="FlyBase"/>
</dbReference>
<dbReference type="GO" id="GO:0005789">
    <property type="term" value="C:endoplasmic reticulum membrane"/>
    <property type="evidence" value="ECO:0000314"/>
    <property type="project" value="FlyBase"/>
</dbReference>
<dbReference type="GO" id="GO:0005635">
    <property type="term" value="C:nuclear envelope"/>
    <property type="evidence" value="ECO:0000314"/>
    <property type="project" value="FlyBase"/>
</dbReference>
<dbReference type="GO" id="GO:0005634">
    <property type="term" value="C:nucleus"/>
    <property type="evidence" value="ECO:0000318"/>
    <property type="project" value="GO_Central"/>
</dbReference>
<dbReference type="GO" id="GO:0005524">
    <property type="term" value="F:ATP binding"/>
    <property type="evidence" value="ECO:0007669"/>
    <property type="project" value="UniProtKB-KW"/>
</dbReference>
<dbReference type="GO" id="GO:0004707">
    <property type="term" value="F:MAP kinase activity"/>
    <property type="evidence" value="ECO:0007669"/>
    <property type="project" value="UniProtKB-EC"/>
</dbReference>
<dbReference type="GO" id="GO:0106310">
    <property type="term" value="F:protein serine kinase activity"/>
    <property type="evidence" value="ECO:0007669"/>
    <property type="project" value="RHEA"/>
</dbReference>
<dbReference type="GO" id="GO:0004674">
    <property type="term" value="F:protein serine/threonine kinase activity"/>
    <property type="evidence" value="ECO:0000318"/>
    <property type="project" value="GO_Central"/>
</dbReference>
<dbReference type="GO" id="GO:0035082">
    <property type="term" value="P:axoneme assembly"/>
    <property type="evidence" value="ECO:0000315"/>
    <property type="project" value="FlyBase"/>
</dbReference>
<dbReference type="GO" id="GO:0034198">
    <property type="term" value="P:cellular response to amino acid starvation"/>
    <property type="evidence" value="ECO:0000315"/>
    <property type="project" value="FlyBase"/>
</dbReference>
<dbReference type="GO" id="GO:0009267">
    <property type="term" value="P:cellular response to starvation"/>
    <property type="evidence" value="ECO:0000315"/>
    <property type="project" value="FlyBase"/>
</dbReference>
<dbReference type="GO" id="GO:1905349">
    <property type="term" value="P:ciliary transition zone assembly"/>
    <property type="evidence" value="ECO:0000315"/>
    <property type="project" value="FlyBase"/>
</dbReference>
<dbReference type="GO" id="GO:0007030">
    <property type="term" value="P:Golgi organization"/>
    <property type="evidence" value="ECO:0000315"/>
    <property type="project" value="FlyBase"/>
</dbReference>
<dbReference type="GO" id="GO:0035556">
    <property type="term" value="P:intracellular signal transduction"/>
    <property type="evidence" value="ECO:0000318"/>
    <property type="project" value="GO_Central"/>
</dbReference>
<dbReference type="GO" id="GO:0034389">
    <property type="term" value="P:lipid droplet organization"/>
    <property type="evidence" value="ECO:0000315"/>
    <property type="project" value="FlyBase"/>
</dbReference>
<dbReference type="GO" id="GO:0045792">
    <property type="term" value="P:negative regulation of cell size"/>
    <property type="evidence" value="ECO:0000315"/>
    <property type="project" value="FlyBase"/>
</dbReference>
<dbReference type="GO" id="GO:0050709">
    <property type="term" value="P:negative regulation of protein secretion"/>
    <property type="evidence" value="ECO:0000315"/>
    <property type="project" value="FlyBase"/>
</dbReference>
<dbReference type="CDD" id="cd07852">
    <property type="entry name" value="STKc_MAPK15-like"/>
    <property type="match status" value="1"/>
</dbReference>
<dbReference type="FunFam" id="1.10.510.10:FF:000238">
    <property type="entry name" value="Mitogen-activated protein kinase"/>
    <property type="match status" value="1"/>
</dbReference>
<dbReference type="FunFam" id="3.30.200.20:FF:000166">
    <property type="entry name" value="Mitogen-activated protein kinase"/>
    <property type="match status" value="1"/>
</dbReference>
<dbReference type="Gene3D" id="3.30.200.20">
    <property type="entry name" value="Phosphorylase Kinase, domain 1"/>
    <property type="match status" value="1"/>
</dbReference>
<dbReference type="Gene3D" id="1.10.510.10">
    <property type="entry name" value="Transferase(Phosphotransferase) domain 1"/>
    <property type="match status" value="1"/>
</dbReference>
<dbReference type="InterPro" id="IPR011009">
    <property type="entry name" value="Kinase-like_dom_sf"/>
</dbReference>
<dbReference type="InterPro" id="IPR050117">
    <property type="entry name" value="MAP_kinase"/>
</dbReference>
<dbReference type="InterPro" id="IPR003527">
    <property type="entry name" value="MAP_kinase_CS"/>
</dbReference>
<dbReference type="InterPro" id="IPR000719">
    <property type="entry name" value="Prot_kinase_dom"/>
</dbReference>
<dbReference type="InterPro" id="IPR008271">
    <property type="entry name" value="Ser/Thr_kinase_AS"/>
</dbReference>
<dbReference type="PANTHER" id="PTHR24055">
    <property type="entry name" value="MITOGEN-ACTIVATED PROTEIN KINASE"/>
    <property type="match status" value="1"/>
</dbReference>
<dbReference type="Pfam" id="PF00069">
    <property type="entry name" value="Pkinase"/>
    <property type="match status" value="1"/>
</dbReference>
<dbReference type="SMART" id="SM00220">
    <property type="entry name" value="S_TKc"/>
    <property type="match status" value="1"/>
</dbReference>
<dbReference type="SUPFAM" id="SSF56112">
    <property type="entry name" value="Protein kinase-like (PK-like)"/>
    <property type="match status" value="1"/>
</dbReference>
<dbReference type="PROSITE" id="PS01351">
    <property type="entry name" value="MAPK"/>
    <property type="match status" value="1"/>
</dbReference>
<dbReference type="PROSITE" id="PS50011">
    <property type="entry name" value="PROTEIN_KINASE_DOM"/>
    <property type="match status" value="1"/>
</dbReference>
<dbReference type="PROSITE" id="PS00108">
    <property type="entry name" value="PROTEIN_KINASE_ST"/>
    <property type="match status" value="1"/>
</dbReference>
<proteinExistence type="evidence at protein level"/>
<keyword id="KW-0025">Alternative splicing</keyword>
<keyword id="KW-0067">ATP-binding</keyword>
<keyword id="KW-0418">Kinase</keyword>
<keyword id="KW-0547">Nucleotide-binding</keyword>
<keyword id="KW-1185">Reference proteome</keyword>
<keyword id="KW-0723">Serine/threonine-protein kinase</keyword>
<keyword id="KW-0808">Transferase</keyword>